<name>BECN1_XENTR</name>
<gene>
    <name type="primary">becn1</name>
</gene>
<organism>
    <name type="scientific">Xenopus tropicalis</name>
    <name type="common">Western clawed frog</name>
    <name type="synonym">Silurana tropicalis</name>
    <dbReference type="NCBI Taxonomy" id="8364"/>
    <lineage>
        <taxon>Eukaryota</taxon>
        <taxon>Metazoa</taxon>
        <taxon>Chordata</taxon>
        <taxon>Craniata</taxon>
        <taxon>Vertebrata</taxon>
        <taxon>Euteleostomi</taxon>
        <taxon>Amphibia</taxon>
        <taxon>Batrachia</taxon>
        <taxon>Anura</taxon>
        <taxon>Pipoidea</taxon>
        <taxon>Pipidae</taxon>
        <taxon>Xenopodinae</taxon>
        <taxon>Xenopus</taxon>
        <taxon>Silurana</taxon>
    </lineage>
</organism>
<reference key="1">
    <citation type="submission" date="2005-07" db="EMBL/GenBank/DDBJ databases">
        <title>Phylogeny and biochemistry of the autophagy protein beclin 1.</title>
        <authorList>
            <person name="Botti J."/>
            <person name="Djavaheri-Mergny M."/>
            <person name="Codogno P."/>
            <person name="Oriol R."/>
        </authorList>
    </citation>
    <scope>NUCLEOTIDE SEQUENCE [MRNA]</scope>
</reference>
<reference key="2">
    <citation type="submission" date="2007-03" db="EMBL/GenBank/DDBJ databases">
        <authorList>
            <consortium name="NIH - Xenopus Gene Collection (XGC) project"/>
        </authorList>
    </citation>
    <scope>NUCLEOTIDE SEQUENCE [LARGE SCALE MRNA]</scope>
    <source>
        <tissue>Embryo</tissue>
    </source>
</reference>
<proteinExistence type="evidence at transcript level"/>
<accession>Q4A1L3</accession>
<keyword id="KW-0051">Antiviral defense</keyword>
<keyword id="KW-0072">Autophagy</keyword>
<keyword id="KW-0131">Cell cycle</keyword>
<keyword id="KW-0132">Cell division</keyword>
<keyword id="KW-0175">Coiled coil</keyword>
<keyword id="KW-0963">Cytoplasm</keyword>
<keyword id="KW-0968">Cytoplasmic vesicle</keyword>
<keyword id="KW-0256">Endoplasmic reticulum</keyword>
<keyword id="KW-0967">Endosome</keyword>
<keyword id="KW-0333">Golgi apparatus</keyword>
<keyword id="KW-0472">Membrane</keyword>
<keyword id="KW-0496">Mitochondrion</keyword>
<keyword id="KW-1185">Reference proteome</keyword>
<sequence>METSKSSTMQVSFVCQRCSQPLKLDTSFKILDKVTMQELTAPLVTTAAVKPGDIQEVDSNIEETFAENRTDGVSRRLIPPARMMSTESATSFTLIGEASDGGTMENLSRRLKVTGDLFDIMSGQTDVDHPLCEECTDTLLDQLDTQLNITENECQNYKRCLEILERMNEDDKEKLEAKLKELAEDEDRLIQELEEVERNRELVAKDIEKVREEAERLEQEEARYQKEYSEFKRQQLELDDDLKSVENQMRYAQIQLDKLKKTNVFNATFHIWHSGQFGTINNFRLGRLPSVPVEWNEINAAWGQTVLLLHALANKMGLQFQRYRLMPFGNHSYLESLTDKSKELPLYCSGGLRFFWDNKFDHAMVAFLDCVQQFKEEVEKGDTGFCLPYRMDVEKGKIEDTGGSGGSYSIKTQFNSEEQWTKALKFMLTNLKWGLAWVSSQFYNK</sequence>
<dbReference type="EMBL" id="AM051356">
    <property type="protein sequence ID" value="CAJ19734.1"/>
    <property type="molecule type" value="mRNA"/>
</dbReference>
<dbReference type="EMBL" id="BC135115">
    <property type="protein sequence ID" value="AAI35116.1"/>
    <property type="molecule type" value="mRNA"/>
</dbReference>
<dbReference type="RefSeq" id="NP_001029112.1">
    <property type="nucleotide sequence ID" value="NM_001033940.2"/>
</dbReference>
<dbReference type="SMR" id="Q4A1L3"/>
<dbReference type="FunCoup" id="Q4A1L3">
    <property type="interactions" value="3402"/>
</dbReference>
<dbReference type="STRING" id="8364.ENSXETP00000032566"/>
<dbReference type="PaxDb" id="8364-ENSXETP00000027611"/>
<dbReference type="DNASU" id="619357"/>
<dbReference type="GeneID" id="619357"/>
<dbReference type="KEGG" id="xtr:619357"/>
<dbReference type="AGR" id="Xenbase:XB-GENE-999318"/>
<dbReference type="CTD" id="8678"/>
<dbReference type="Xenbase" id="XB-GENE-999318">
    <property type="gene designation" value="becn1"/>
</dbReference>
<dbReference type="eggNOG" id="KOG2751">
    <property type="taxonomic scope" value="Eukaryota"/>
</dbReference>
<dbReference type="HOGENOM" id="CLU_024219_4_1_1"/>
<dbReference type="InParanoid" id="Q4A1L3"/>
<dbReference type="OMA" id="EWDVYKA"/>
<dbReference type="OrthoDB" id="20368at2759"/>
<dbReference type="PhylomeDB" id="Q4A1L3"/>
<dbReference type="TreeFam" id="TF314282"/>
<dbReference type="Reactome" id="R-XTR-1632852">
    <property type="pathway name" value="Macroautophagy"/>
</dbReference>
<dbReference type="Proteomes" id="UP000008143">
    <property type="component" value="Chromosome 10"/>
</dbReference>
<dbReference type="Bgee" id="ENSXETG00000012613">
    <property type="expression patterns" value="Expressed in heart and 16 other cell types or tissues"/>
</dbReference>
<dbReference type="ExpressionAtlas" id="Q4A1L3">
    <property type="expression patterns" value="differential"/>
</dbReference>
<dbReference type="GO" id="GO:0005776">
    <property type="term" value="C:autophagosome"/>
    <property type="evidence" value="ECO:0007669"/>
    <property type="project" value="UniProtKB-SubCell"/>
</dbReference>
<dbReference type="GO" id="GO:0005789">
    <property type="term" value="C:endoplasmic reticulum membrane"/>
    <property type="evidence" value="ECO:0007669"/>
    <property type="project" value="UniProtKB-SubCell"/>
</dbReference>
<dbReference type="GO" id="GO:0010008">
    <property type="term" value="C:endosome membrane"/>
    <property type="evidence" value="ECO:0007669"/>
    <property type="project" value="UniProtKB-SubCell"/>
</dbReference>
<dbReference type="GO" id="GO:0005794">
    <property type="term" value="C:Golgi apparatus"/>
    <property type="evidence" value="ECO:0007669"/>
    <property type="project" value="UniProtKB-SubCell"/>
</dbReference>
<dbReference type="GO" id="GO:0031966">
    <property type="term" value="C:mitochondrial membrane"/>
    <property type="evidence" value="ECO:0007669"/>
    <property type="project" value="UniProtKB-SubCell"/>
</dbReference>
<dbReference type="GO" id="GO:0006914">
    <property type="term" value="P:autophagy"/>
    <property type="evidence" value="ECO:0000250"/>
    <property type="project" value="UniProtKB"/>
</dbReference>
<dbReference type="GO" id="GO:0051301">
    <property type="term" value="P:cell division"/>
    <property type="evidence" value="ECO:0007669"/>
    <property type="project" value="UniProtKB-KW"/>
</dbReference>
<dbReference type="GO" id="GO:0051607">
    <property type="term" value="P:defense response to virus"/>
    <property type="evidence" value="ECO:0007669"/>
    <property type="project" value="UniProtKB-KW"/>
</dbReference>
<dbReference type="GO" id="GO:0045022">
    <property type="term" value="P:early endosome to late endosome transport"/>
    <property type="evidence" value="ECO:0000250"/>
    <property type="project" value="UniProtKB"/>
</dbReference>
<dbReference type="GO" id="GO:0010508">
    <property type="term" value="P:positive regulation of autophagy"/>
    <property type="evidence" value="ECO:0000250"/>
    <property type="project" value="UniProtKB"/>
</dbReference>
<dbReference type="GO" id="GO:0032465">
    <property type="term" value="P:regulation of cytokinesis"/>
    <property type="evidence" value="ECO:0000250"/>
    <property type="project" value="UniProtKB"/>
</dbReference>
<dbReference type="FunFam" id="1.10.418.40:FF:000001">
    <property type="entry name" value="beclin-1 isoform X1"/>
    <property type="match status" value="1"/>
</dbReference>
<dbReference type="Gene3D" id="6.10.250.3110">
    <property type="match status" value="1"/>
</dbReference>
<dbReference type="Gene3D" id="1.10.418.40">
    <property type="entry name" value="Autophagy protein 6/Beclin 1"/>
    <property type="match status" value="1"/>
</dbReference>
<dbReference type="InterPro" id="IPR007243">
    <property type="entry name" value="Atg6/Beclin"/>
</dbReference>
<dbReference type="InterPro" id="IPR038274">
    <property type="entry name" value="Atg6/Beclin_C_sf"/>
</dbReference>
<dbReference type="InterPro" id="IPR041691">
    <property type="entry name" value="Atg6/beclin_CC"/>
</dbReference>
<dbReference type="InterPro" id="IPR040455">
    <property type="entry name" value="Atg6_BARA"/>
</dbReference>
<dbReference type="InterPro" id="IPR029318">
    <property type="entry name" value="BH3_dom"/>
</dbReference>
<dbReference type="PANTHER" id="PTHR12768">
    <property type="entry name" value="BECLIN 1"/>
    <property type="match status" value="1"/>
</dbReference>
<dbReference type="PANTHER" id="PTHR12768:SF4">
    <property type="entry name" value="BECLIN-1"/>
    <property type="match status" value="1"/>
</dbReference>
<dbReference type="Pfam" id="PF04111">
    <property type="entry name" value="APG6"/>
    <property type="match status" value="1"/>
</dbReference>
<dbReference type="Pfam" id="PF17675">
    <property type="entry name" value="APG6_N"/>
    <property type="match status" value="1"/>
</dbReference>
<dbReference type="Pfam" id="PF15285">
    <property type="entry name" value="BH3"/>
    <property type="match status" value="1"/>
</dbReference>
<feature type="chain" id="PRO_0000316293" description="Beclin-1">
    <location>
        <begin position="1"/>
        <end position="445"/>
    </location>
</feature>
<feature type="region of interest" description="Evolutionary conserved domain (ECD)" evidence="2">
    <location>
        <begin position="240"/>
        <end position="445"/>
    </location>
</feature>
<feature type="region of interest" description="Required for membrane-association" evidence="2">
    <location>
        <begin position="420"/>
        <end position="445"/>
    </location>
</feature>
<feature type="coiled-coil region" evidence="3">
    <location>
        <begin position="137"/>
        <end position="264"/>
    </location>
</feature>
<feature type="short sequence motif" description="BH3" evidence="2">
    <location>
        <begin position="103"/>
        <end position="122"/>
    </location>
</feature>
<comment type="function">
    <text evidence="2">Plays a central role in autophagy (By similarity). Acts as core subunit of different PI3K complex forms that mediate formation of phosphatidylinositol 3-phosphate and are believed to play a role in multiple membrane trafficking pathways: PI3KC3-C1 is involved in initiation of autophagosomes and PI3KC3-C2 in maturation of autophagosomes and endocytosis (By similarity). Involved in regulation of degradative endocytic trafficking and required for the abscission step in cytokinesis, probably in the context of PI3KC3-C2 (By similarity). Essential for the formation of PI3KC3-C2 but not PI3KC3-C1 PI3K complex forms (By similarity). Involved in endocytosis including endosome formation in neuronal cells (By similarity).</text>
</comment>
<comment type="subunit">
    <text evidence="2">Component of the PI3K (PI3KC3/PI3K-III/class III phosphatidylinositol 3-kinase) complex (By similarity).</text>
</comment>
<comment type="subcellular location">
    <subcellularLocation>
        <location evidence="1">Cytoplasm</location>
    </subcellularLocation>
    <subcellularLocation>
        <location evidence="2">Golgi apparatus</location>
        <location evidence="2">trans-Golgi network membrane</location>
        <topology evidence="2">Peripheral membrane protein</topology>
    </subcellularLocation>
    <subcellularLocation>
        <location evidence="2">Endosome membrane</location>
        <topology evidence="2">Peripheral membrane protein</topology>
    </subcellularLocation>
    <subcellularLocation>
        <location evidence="2">Endoplasmic reticulum membrane</location>
        <topology evidence="2">Peripheral membrane protein</topology>
    </subcellularLocation>
    <subcellularLocation>
        <location evidence="2">Mitochondrion membrane</location>
        <topology evidence="2">Peripheral membrane protein</topology>
    </subcellularLocation>
    <subcellularLocation>
        <location evidence="4">Cytoplasmic vesicle</location>
        <location evidence="4">Autophagosome</location>
    </subcellularLocation>
</comment>
<comment type="PTM">
    <text evidence="1 2">May be proteolytically processed by caspases; the C-terminal fragment(s) may induce apoptosis.</text>
</comment>
<comment type="similarity">
    <text evidence="4">Belongs to the beclin family.</text>
</comment>
<protein>
    <recommendedName>
        <fullName>Beclin-1</fullName>
    </recommendedName>
</protein>
<evidence type="ECO:0000250" key="1">
    <source>
        <dbReference type="UniProtKB" id="O88597"/>
    </source>
</evidence>
<evidence type="ECO:0000250" key="2">
    <source>
        <dbReference type="UniProtKB" id="Q14457"/>
    </source>
</evidence>
<evidence type="ECO:0000255" key="3"/>
<evidence type="ECO:0000305" key="4"/>